<accession>A6TVQ2</accession>
<evidence type="ECO:0000255" key="1">
    <source>
        <dbReference type="HAMAP-Rule" id="MF_00068"/>
    </source>
</evidence>
<protein>
    <recommendedName>
        <fullName evidence="1">N-acetylmuramic acid 6-phosphate etherase</fullName>
        <shortName evidence="1">MurNAc-6-P etherase</shortName>
        <ecNumber evidence="1">4.2.1.126</ecNumber>
    </recommendedName>
    <alternativeName>
        <fullName evidence="1">N-acetylmuramic acid 6-phosphate hydrolase</fullName>
    </alternativeName>
    <alternativeName>
        <fullName evidence="1">N-acetylmuramic acid 6-phosphate lyase</fullName>
    </alternativeName>
</protein>
<dbReference type="EC" id="4.2.1.126" evidence="1"/>
<dbReference type="EMBL" id="CP000724">
    <property type="protein sequence ID" value="ABR50270.1"/>
    <property type="molecule type" value="Genomic_DNA"/>
</dbReference>
<dbReference type="RefSeq" id="WP_012065218.1">
    <property type="nucleotide sequence ID" value="NC_009633.1"/>
</dbReference>
<dbReference type="SMR" id="A6TVQ2"/>
<dbReference type="STRING" id="293826.Amet_4189"/>
<dbReference type="KEGG" id="amt:Amet_4189"/>
<dbReference type="eggNOG" id="COG2103">
    <property type="taxonomic scope" value="Bacteria"/>
</dbReference>
<dbReference type="HOGENOM" id="CLU_049049_1_1_9"/>
<dbReference type="OrthoDB" id="9813395at2"/>
<dbReference type="UniPathway" id="UPA00342"/>
<dbReference type="Proteomes" id="UP000001572">
    <property type="component" value="Chromosome"/>
</dbReference>
<dbReference type="GO" id="GO:0097367">
    <property type="term" value="F:carbohydrate derivative binding"/>
    <property type="evidence" value="ECO:0007669"/>
    <property type="project" value="InterPro"/>
</dbReference>
<dbReference type="GO" id="GO:0016835">
    <property type="term" value="F:carbon-oxygen lyase activity"/>
    <property type="evidence" value="ECO:0007669"/>
    <property type="project" value="UniProtKB-UniRule"/>
</dbReference>
<dbReference type="GO" id="GO:0016803">
    <property type="term" value="F:ether hydrolase activity"/>
    <property type="evidence" value="ECO:0007669"/>
    <property type="project" value="TreeGrafter"/>
</dbReference>
<dbReference type="GO" id="GO:0046348">
    <property type="term" value="P:amino sugar catabolic process"/>
    <property type="evidence" value="ECO:0007669"/>
    <property type="project" value="InterPro"/>
</dbReference>
<dbReference type="GO" id="GO:0097173">
    <property type="term" value="P:N-acetylmuramic acid catabolic process"/>
    <property type="evidence" value="ECO:0007669"/>
    <property type="project" value="UniProtKB-UniPathway"/>
</dbReference>
<dbReference type="GO" id="GO:0009254">
    <property type="term" value="P:peptidoglycan turnover"/>
    <property type="evidence" value="ECO:0007669"/>
    <property type="project" value="TreeGrafter"/>
</dbReference>
<dbReference type="CDD" id="cd05007">
    <property type="entry name" value="SIS_Etherase"/>
    <property type="match status" value="1"/>
</dbReference>
<dbReference type="FunFam" id="1.10.8.1080:FF:000001">
    <property type="entry name" value="N-acetylmuramic acid 6-phosphate etherase"/>
    <property type="match status" value="1"/>
</dbReference>
<dbReference type="FunFam" id="3.40.50.10490:FF:000014">
    <property type="entry name" value="N-acetylmuramic acid 6-phosphate etherase"/>
    <property type="match status" value="1"/>
</dbReference>
<dbReference type="Gene3D" id="1.10.8.1080">
    <property type="match status" value="1"/>
</dbReference>
<dbReference type="Gene3D" id="3.40.50.10490">
    <property type="entry name" value="Glucose-6-phosphate isomerase like protein, domain 1"/>
    <property type="match status" value="1"/>
</dbReference>
<dbReference type="HAMAP" id="MF_00068">
    <property type="entry name" value="MurQ"/>
    <property type="match status" value="1"/>
</dbReference>
<dbReference type="InterPro" id="IPR005488">
    <property type="entry name" value="Etherase_MurQ"/>
</dbReference>
<dbReference type="InterPro" id="IPR005486">
    <property type="entry name" value="Glucokinase_regulatory_CS"/>
</dbReference>
<dbReference type="InterPro" id="IPR040190">
    <property type="entry name" value="MURQ/GCKR"/>
</dbReference>
<dbReference type="InterPro" id="IPR001347">
    <property type="entry name" value="SIS_dom"/>
</dbReference>
<dbReference type="InterPro" id="IPR046348">
    <property type="entry name" value="SIS_dom_sf"/>
</dbReference>
<dbReference type="NCBIfam" id="TIGR00274">
    <property type="entry name" value="N-acetylmuramic acid 6-phosphate etherase"/>
    <property type="match status" value="1"/>
</dbReference>
<dbReference type="NCBIfam" id="NF003915">
    <property type="entry name" value="PRK05441.1"/>
    <property type="match status" value="1"/>
</dbReference>
<dbReference type="NCBIfam" id="NF009222">
    <property type="entry name" value="PRK12570.1"/>
    <property type="match status" value="1"/>
</dbReference>
<dbReference type="PANTHER" id="PTHR10088">
    <property type="entry name" value="GLUCOKINASE REGULATORY PROTEIN"/>
    <property type="match status" value="1"/>
</dbReference>
<dbReference type="PANTHER" id="PTHR10088:SF4">
    <property type="entry name" value="GLUCOKINASE REGULATORY PROTEIN"/>
    <property type="match status" value="1"/>
</dbReference>
<dbReference type="Pfam" id="PF22645">
    <property type="entry name" value="GKRP_SIS_N"/>
    <property type="match status" value="1"/>
</dbReference>
<dbReference type="SUPFAM" id="SSF53697">
    <property type="entry name" value="SIS domain"/>
    <property type="match status" value="1"/>
</dbReference>
<dbReference type="PROSITE" id="PS01272">
    <property type="entry name" value="GCKR"/>
    <property type="match status" value="1"/>
</dbReference>
<dbReference type="PROSITE" id="PS51464">
    <property type="entry name" value="SIS"/>
    <property type="match status" value="1"/>
</dbReference>
<reference key="1">
    <citation type="journal article" date="2016" name="Genome Announc.">
        <title>Complete genome sequence of Alkaliphilus metalliredigens strain QYMF, an alkaliphilic and metal-reducing bacterium isolated from borax-contaminated leachate ponds.</title>
        <authorList>
            <person name="Hwang C."/>
            <person name="Copeland A."/>
            <person name="Lucas S."/>
            <person name="Lapidus A."/>
            <person name="Barry K."/>
            <person name="Detter J.C."/>
            <person name="Glavina Del Rio T."/>
            <person name="Hammon N."/>
            <person name="Israni S."/>
            <person name="Dalin E."/>
            <person name="Tice H."/>
            <person name="Pitluck S."/>
            <person name="Chertkov O."/>
            <person name="Brettin T."/>
            <person name="Bruce D."/>
            <person name="Han C."/>
            <person name="Schmutz J."/>
            <person name="Larimer F."/>
            <person name="Land M.L."/>
            <person name="Hauser L."/>
            <person name="Kyrpides N."/>
            <person name="Mikhailova N."/>
            <person name="Ye Q."/>
            <person name="Zhou J."/>
            <person name="Richardson P."/>
            <person name="Fields M.W."/>
        </authorList>
    </citation>
    <scope>NUCLEOTIDE SEQUENCE [LARGE SCALE GENOMIC DNA]</scope>
    <source>
        <strain>QYMF</strain>
    </source>
</reference>
<feature type="chain" id="PRO_1000057455" description="N-acetylmuramic acid 6-phosphate etherase">
    <location>
        <begin position="1"/>
        <end position="307"/>
    </location>
</feature>
<feature type="domain" description="SIS" evidence="1">
    <location>
        <begin position="57"/>
        <end position="220"/>
    </location>
</feature>
<feature type="active site" description="Proton donor" evidence="1">
    <location>
        <position position="85"/>
    </location>
</feature>
<feature type="active site" evidence="1">
    <location>
        <position position="116"/>
    </location>
</feature>
<proteinExistence type="inferred from homology"/>
<organism>
    <name type="scientific">Alkaliphilus metalliredigens (strain QYMF)</name>
    <dbReference type="NCBI Taxonomy" id="293826"/>
    <lineage>
        <taxon>Bacteria</taxon>
        <taxon>Bacillati</taxon>
        <taxon>Bacillota</taxon>
        <taxon>Clostridia</taxon>
        <taxon>Peptostreptococcales</taxon>
        <taxon>Natronincolaceae</taxon>
        <taxon>Alkaliphilus</taxon>
    </lineage>
</organism>
<sequence length="307" mass="32765">MLNNLEQLTTEKVNLETLNIDEKSPLEIVKVINEEDKKVALAVEKELPNIAKAVEKIIEAFKTNGRLIYLGAGTSGRLGILDAAECPPTFGTSKEQVIGLIAGGREALLEAVEGAEDSKEEGIKDLKNIKLTSQDIVVGIAASGRTPYVVGGLNYANNIGATTVALCCNKDAVITRVADIAIVPVVGPEVIAGSTRLKSGTAQKLVLNMLTTASMIGVGKVYKNLMVDVQTTNEKLEDRSKRIVMMATGVGEIEATEILKNSNYQPKVAILMINTGCSFVEATAKLQEAGGFVKKALEYIKEGEEIC</sequence>
<comment type="function">
    <text evidence="1">Specifically catalyzes the cleavage of the D-lactyl ether substituent of MurNAc 6-phosphate, producing GlcNAc 6-phosphate and D-lactate.</text>
</comment>
<comment type="catalytic activity">
    <reaction evidence="1">
        <text>N-acetyl-D-muramate 6-phosphate + H2O = N-acetyl-D-glucosamine 6-phosphate + (R)-lactate</text>
        <dbReference type="Rhea" id="RHEA:26410"/>
        <dbReference type="ChEBI" id="CHEBI:15377"/>
        <dbReference type="ChEBI" id="CHEBI:16004"/>
        <dbReference type="ChEBI" id="CHEBI:57513"/>
        <dbReference type="ChEBI" id="CHEBI:58722"/>
        <dbReference type="EC" id="4.2.1.126"/>
    </reaction>
</comment>
<comment type="pathway">
    <text evidence="1">Amino-sugar metabolism; N-acetylmuramate degradation.</text>
</comment>
<comment type="subunit">
    <text evidence="1">Homodimer.</text>
</comment>
<comment type="miscellaneous">
    <text evidence="1">A lyase-type mechanism (elimination/hydration) is suggested for the cleavage of the lactyl ether bond of MurNAc 6-phosphate, with the formation of an alpha,beta-unsaturated aldehyde intermediate with (E)-stereochemistry, followed by the syn addition of water to give product.</text>
</comment>
<comment type="similarity">
    <text evidence="1">Belongs to the GCKR-like family. MurNAc-6-P etherase subfamily.</text>
</comment>
<name>MURQ_ALKMQ</name>
<keyword id="KW-0119">Carbohydrate metabolism</keyword>
<keyword id="KW-0456">Lyase</keyword>
<keyword id="KW-1185">Reference proteome</keyword>
<gene>
    <name evidence="1" type="primary">murQ</name>
    <name type="ordered locus">Amet_4189</name>
</gene>